<organism>
    <name type="scientific">Escherichia coli (strain K12)</name>
    <dbReference type="NCBI Taxonomy" id="83333"/>
    <lineage>
        <taxon>Bacteria</taxon>
        <taxon>Pseudomonadati</taxon>
        <taxon>Pseudomonadota</taxon>
        <taxon>Gammaproteobacteria</taxon>
        <taxon>Enterobacterales</taxon>
        <taxon>Enterobacteriaceae</taxon>
        <taxon>Escherichia</taxon>
    </lineage>
</organism>
<accession>Q46943</accession>
<accession>P77135</accession>
<accession>Q2M9Y9</accession>
<dbReference type="EMBL" id="U29581">
    <property type="protein sequence ID" value="AAB40495.1"/>
    <property type="status" value="ALT_INIT"/>
    <property type="molecule type" value="Genomic_DNA"/>
</dbReference>
<dbReference type="EMBL" id="U00096">
    <property type="protein sequence ID" value="AAC75887.2"/>
    <property type="molecule type" value="Genomic_DNA"/>
</dbReference>
<dbReference type="EMBL" id="AP009048">
    <property type="protein sequence ID" value="BAE76917.1"/>
    <property type="molecule type" value="Genomic_DNA"/>
</dbReference>
<dbReference type="EMBL" id="U83187">
    <property type="protein sequence ID" value="AAB40287.1"/>
    <property type="molecule type" value="Genomic_DNA"/>
</dbReference>
<dbReference type="PIR" id="A65068">
    <property type="entry name" value="A65068"/>
</dbReference>
<dbReference type="RefSeq" id="NP_417325.4">
    <property type="nucleotide sequence ID" value="NC_000913.3"/>
</dbReference>
<dbReference type="RefSeq" id="WP_000568339.1">
    <property type="nucleotide sequence ID" value="NZ_STEB01000034.1"/>
</dbReference>
<dbReference type="SMR" id="Q46943"/>
<dbReference type="BioGRID" id="4261704">
    <property type="interactions" value="12"/>
</dbReference>
<dbReference type="FunCoup" id="Q46943">
    <property type="interactions" value="39"/>
</dbReference>
<dbReference type="STRING" id="511145.b2848"/>
<dbReference type="PaxDb" id="511145-b2848"/>
<dbReference type="EnsemblBacteria" id="AAC75887">
    <property type="protein sequence ID" value="AAC75887"/>
    <property type="gene ID" value="b2848"/>
</dbReference>
<dbReference type="GeneID" id="93779146"/>
<dbReference type="GeneID" id="947328"/>
<dbReference type="KEGG" id="ecj:JW5455"/>
<dbReference type="KEGG" id="eco:b2848"/>
<dbReference type="KEGG" id="ecoc:C3026_15635"/>
<dbReference type="PATRIC" id="fig|511145.12.peg.2946"/>
<dbReference type="EchoBASE" id="EB2904"/>
<dbReference type="eggNOG" id="ENOG50326Q6">
    <property type="taxonomic scope" value="Bacteria"/>
</dbReference>
<dbReference type="HOGENOM" id="CLU_143529_0_0_6"/>
<dbReference type="InParanoid" id="Q46943"/>
<dbReference type="OMA" id="EYTWVEN"/>
<dbReference type="OrthoDB" id="6591137at2"/>
<dbReference type="PhylomeDB" id="Q46943"/>
<dbReference type="BioCyc" id="EcoCyc:G7468-MONOMER"/>
<dbReference type="PRO" id="PR:Q46943"/>
<dbReference type="Proteomes" id="UP000000625">
    <property type="component" value="Chromosome"/>
</dbReference>
<dbReference type="GO" id="GO:0016020">
    <property type="term" value="C:membrane"/>
    <property type="evidence" value="ECO:0007669"/>
    <property type="project" value="UniProtKB-SubCell"/>
</dbReference>
<gene>
    <name type="primary">yqeJ</name>
    <name type="ordered locus">b2848</name>
    <name type="ordered locus">JW5455</name>
</gene>
<comment type="subcellular location">
    <subcellularLocation>
        <location evidence="2">Membrane</location>
        <topology evidence="2">Single-pass membrane protein</topology>
    </subcellularLocation>
</comment>
<comment type="sequence caution" evidence="2">
    <conflict type="erroneous initiation">
        <sequence resource="EMBL-CDS" id="AAB40495"/>
    </conflict>
    <text>Extended N-terminus.</text>
</comment>
<proteinExistence type="predicted"/>
<feature type="chain" id="PRO_0000169348" description="Uncharacterized protein YqeJ">
    <location>
        <begin position="1"/>
        <end position="160"/>
    </location>
</feature>
<feature type="transmembrane region" description="Helical" evidence="1">
    <location>
        <begin position="8"/>
        <end position="28"/>
    </location>
</feature>
<name>YQEJ_ECOLI</name>
<protein>
    <recommendedName>
        <fullName>Uncharacterized protein YqeJ</fullName>
    </recommendedName>
</protein>
<keyword id="KW-0472">Membrane</keyword>
<keyword id="KW-1185">Reference proteome</keyword>
<keyword id="KW-0812">Transmembrane</keyword>
<keyword id="KW-1133">Transmembrane helix</keyword>
<evidence type="ECO:0000255" key="1"/>
<evidence type="ECO:0000305" key="2"/>
<reference key="1">
    <citation type="journal article" date="1997" name="Science">
        <title>The complete genome sequence of Escherichia coli K-12.</title>
        <authorList>
            <person name="Blattner F.R."/>
            <person name="Plunkett G. III"/>
            <person name="Bloch C.A."/>
            <person name="Perna N.T."/>
            <person name="Burland V."/>
            <person name="Riley M."/>
            <person name="Collado-Vides J."/>
            <person name="Glasner J.D."/>
            <person name="Rode C.K."/>
            <person name="Mayhew G.F."/>
            <person name="Gregor J."/>
            <person name="Davis N.W."/>
            <person name="Kirkpatrick H.A."/>
            <person name="Goeden M.A."/>
            <person name="Rose D.J."/>
            <person name="Mau B."/>
            <person name="Shao Y."/>
        </authorList>
    </citation>
    <scope>NUCLEOTIDE SEQUENCE [LARGE SCALE GENOMIC DNA]</scope>
    <source>
        <strain>K12 / MG1655 / ATCC 47076</strain>
    </source>
</reference>
<reference key="2">
    <citation type="journal article" date="2006" name="Mol. Syst. Biol.">
        <title>Highly accurate genome sequences of Escherichia coli K-12 strains MG1655 and W3110.</title>
        <authorList>
            <person name="Hayashi K."/>
            <person name="Morooka N."/>
            <person name="Yamamoto Y."/>
            <person name="Fujita K."/>
            <person name="Isono K."/>
            <person name="Choi S."/>
            <person name="Ohtsubo E."/>
            <person name="Baba T."/>
            <person name="Wanner B.L."/>
            <person name="Mori H."/>
            <person name="Horiuchi T."/>
        </authorList>
    </citation>
    <scope>NUCLEOTIDE SEQUENCE [LARGE SCALE GENOMIC DNA]</scope>
    <source>
        <strain>K12 / W3110 / ATCC 27325 / DSM 5911</strain>
    </source>
</reference>
<reference key="3">
    <citation type="submission" date="1997-01" db="EMBL/GenBank/DDBJ databases">
        <title>Sequence of minutes 4-25 of Escherichia coli.</title>
        <authorList>
            <person name="Chung E."/>
            <person name="Allen E."/>
            <person name="Araujo R."/>
            <person name="Aparicio A.M."/>
            <person name="Davis K."/>
            <person name="Duncan M."/>
            <person name="Federspiel N."/>
            <person name="Hyman R."/>
            <person name="Kalman S."/>
            <person name="Komp C."/>
            <person name="Kurdi O."/>
            <person name="Lew H."/>
            <person name="Lin D."/>
            <person name="Namath A."/>
            <person name="Oefner P."/>
            <person name="Roberts D."/>
            <person name="Schramm S."/>
            <person name="Davis R.W."/>
        </authorList>
    </citation>
    <scope>NUCLEOTIDE SEQUENCE [LARGE SCALE GENOMIC DNA] OF 34-160</scope>
    <source>
        <strain>K12 / MG1655 / ATCC 47076</strain>
    </source>
</reference>
<sequence>MIDYKKNLLFILVFISGFILFTVYSYTAEKMIYNETCTANWVIFNDQGRANLTIDFMYNKKNKTGTVALSGTWQQGNRESKSIRRNIEYTWIENYDTAHLTSKKVNKFEIMDQVDDDRLAQLIPDFYVFPEKSVSYNILKQGKHAFILSIGNRAIMHCAR</sequence>